<reference key="1">
    <citation type="journal article" date="2008" name="Appl. Environ. Microbiol.">
        <title>Genome of the epsilonproteobacterial chemolithoautotroph Sulfurimonas denitrificans.</title>
        <authorList>
            <person name="Sievert S.M."/>
            <person name="Scott K.M."/>
            <person name="Klotz M.G."/>
            <person name="Chain P.S.G."/>
            <person name="Hauser L.J."/>
            <person name="Hemp J."/>
            <person name="Huegler M."/>
            <person name="Land M."/>
            <person name="Lapidus A."/>
            <person name="Larimer F.W."/>
            <person name="Lucas S."/>
            <person name="Malfatti S.A."/>
            <person name="Meyer F."/>
            <person name="Paulsen I.T."/>
            <person name="Ren Q."/>
            <person name="Simon J."/>
            <person name="Bailey K."/>
            <person name="Diaz E."/>
            <person name="Fitzpatrick K.A."/>
            <person name="Glover B."/>
            <person name="Gwatney N."/>
            <person name="Korajkic A."/>
            <person name="Long A."/>
            <person name="Mobberley J.M."/>
            <person name="Pantry S.N."/>
            <person name="Pazder G."/>
            <person name="Peterson S."/>
            <person name="Quintanilla J.D."/>
            <person name="Sprinkle R."/>
            <person name="Stephens J."/>
            <person name="Thomas P."/>
            <person name="Vaughn R."/>
            <person name="Weber M.J."/>
            <person name="Wooten L.L."/>
        </authorList>
    </citation>
    <scope>NUCLEOTIDE SEQUENCE [LARGE SCALE GENOMIC DNA]</scope>
    <source>
        <strain>ATCC 33889 / DSM 1251</strain>
    </source>
</reference>
<proteinExistence type="inferred from homology"/>
<sequence>MLLSSIAQHLKLPFFGEDLELDSMNELALSLPSQLTFAINKKYSQELESSKSKAFLIIDTLVENLPKESSYIICPDVSISMAQATKLFNKRPIEPQLPSATIGEGSMIDSMVRVENGTCIGSNVIVMAGAYIGANCVIGDDTTIYPNVTIYRDTIIGKECIIHAGVVIGADGFGFSHTKEGEHIKIYQNGNVIIEDCVEIGANCAIDRAVFNSTIIRRGTKLDNFIHIAHNCDIGEHSIFVAQTGVGGSTKLGRNCVVSGQSAFSDHLNIAPFSTFSARSGVTKSIEKSGGVYSGFPLMNHKEWKRLQVKIARLND</sequence>
<protein>
    <recommendedName>
        <fullName evidence="1">UDP-3-O-acylglucosamine N-acyltransferase 2</fullName>
        <ecNumber evidence="1">2.3.1.191</ecNumber>
    </recommendedName>
</protein>
<gene>
    <name evidence="1" type="primary">lpxD2</name>
    <name type="ordered locus">Suden_1139</name>
</gene>
<name>LPXD2_SULDN</name>
<keyword id="KW-0012">Acyltransferase</keyword>
<keyword id="KW-0441">Lipid A biosynthesis</keyword>
<keyword id="KW-0444">Lipid biosynthesis</keyword>
<keyword id="KW-0443">Lipid metabolism</keyword>
<keyword id="KW-1185">Reference proteome</keyword>
<keyword id="KW-0677">Repeat</keyword>
<keyword id="KW-0808">Transferase</keyword>
<evidence type="ECO:0000255" key="1">
    <source>
        <dbReference type="HAMAP-Rule" id="MF_00523"/>
    </source>
</evidence>
<accession>Q30RG4</accession>
<comment type="function">
    <text evidence="1">Catalyzes the N-acylation of UDP-3-O-acylglucosamine using 3-hydroxyacyl-ACP as the acyl donor. Is involved in the biosynthesis of lipid A, a phosphorylated glycolipid that anchors the lipopolysaccharide to the outer membrane of the cell.</text>
</comment>
<comment type="catalytic activity">
    <reaction evidence="1">
        <text>a UDP-3-O-[(3R)-3-hydroxyacyl]-alpha-D-glucosamine + a (3R)-hydroxyacyl-[ACP] = a UDP-2-N,3-O-bis[(3R)-3-hydroxyacyl]-alpha-D-glucosamine + holo-[ACP] + H(+)</text>
        <dbReference type="Rhea" id="RHEA:53836"/>
        <dbReference type="Rhea" id="RHEA-COMP:9685"/>
        <dbReference type="Rhea" id="RHEA-COMP:9945"/>
        <dbReference type="ChEBI" id="CHEBI:15378"/>
        <dbReference type="ChEBI" id="CHEBI:64479"/>
        <dbReference type="ChEBI" id="CHEBI:78827"/>
        <dbReference type="ChEBI" id="CHEBI:137740"/>
        <dbReference type="ChEBI" id="CHEBI:137748"/>
        <dbReference type="EC" id="2.3.1.191"/>
    </reaction>
</comment>
<comment type="pathway">
    <text evidence="1">Bacterial outer membrane biogenesis; LPS lipid A biosynthesis.</text>
</comment>
<comment type="subunit">
    <text evidence="1">Homotrimer.</text>
</comment>
<comment type="similarity">
    <text evidence="1">Belongs to the transferase hexapeptide repeat family. LpxD subfamily.</text>
</comment>
<feature type="chain" id="PRO_0000264453" description="UDP-3-O-acylglucosamine N-acyltransferase 2">
    <location>
        <begin position="1"/>
        <end position="316"/>
    </location>
</feature>
<feature type="active site" description="Proton acceptor" evidence="1">
    <location>
        <position position="230"/>
    </location>
</feature>
<dbReference type="EC" id="2.3.1.191" evidence="1"/>
<dbReference type="EMBL" id="CP000153">
    <property type="protein sequence ID" value="ABB44417.1"/>
    <property type="molecule type" value="Genomic_DNA"/>
</dbReference>
<dbReference type="RefSeq" id="WP_011372769.1">
    <property type="nucleotide sequence ID" value="NC_007575.1"/>
</dbReference>
<dbReference type="SMR" id="Q30RG4"/>
<dbReference type="STRING" id="326298.Suden_1139"/>
<dbReference type="KEGG" id="tdn:Suden_1139"/>
<dbReference type="eggNOG" id="COG1044">
    <property type="taxonomic scope" value="Bacteria"/>
</dbReference>
<dbReference type="HOGENOM" id="CLU_049865_0_1_7"/>
<dbReference type="OrthoDB" id="9784739at2"/>
<dbReference type="UniPathway" id="UPA00973"/>
<dbReference type="Proteomes" id="UP000002714">
    <property type="component" value="Chromosome"/>
</dbReference>
<dbReference type="GO" id="GO:0016020">
    <property type="term" value="C:membrane"/>
    <property type="evidence" value="ECO:0007669"/>
    <property type="project" value="GOC"/>
</dbReference>
<dbReference type="GO" id="GO:0016410">
    <property type="term" value="F:N-acyltransferase activity"/>
    <property type="evidence" value="ECO:0007669"/>
    <property type="project" value="InterPro"/>
</dbReference>
<dbReference type="GO" id="GO:0009245">
    <property type="term" value="P:lipid A biosynthetic process"/>
    <property type="evidence" value="ECO:0007669"/>
    <property type="project" value="UniProtKB-UniRule"/>
</dbReference>
<dbReference type="CDD" id="cd03352">
    <property type="entry name" value="LbH_LpxD"/>
    <property type="match status" value="1"/>
</dbReference>
<dbReference type="Gene3D" id="2.160.10.10">
    <property type="entry name" value="Hexapeptide repeat proteins"/>
    <property type="match status" value="1"/>
</dbReference>
<dbReference type="Gene3D" id="3.40.1390.10">
    <property type="entry name" value="MurE/MurF, N-terminal domain"/>
    <property type="match status" value="1"/>
</dbReference>
<dbReference type="HAMAP" id="MF_00523">
    <property type="entry name" value="LpxD"/>
    <property type="match status" value="1"/>
</dbReference>
<dbReference type="InterPro" id="IPR001451">
    <property type="entry name" value="Hexapep"/>
</dbReference>
<dbReference type="InterPro" id="IPR007691">
    <property type="entry name" value="LpxD"/>
</dbReference>
<dbReference type="InterPro" id="IPR011004">
    <property type="entry name" value="Trimer_LpxA-like_sf"/>
</dbReference>
<dbReference type="InterPro" id="IPR020573">
    <property type="entry name" value="UDP_GlcNAc_AcTrfase_non-rep"/>
</dbReference>
<dbReference type="NCBIfam" id="TIGR01853">
    <property type="entry name" value="lipid_A_lpxD"/>
    <property type="match status" value="1"/>
</dbReference>
<dbReference type="NCBIfam" id="NF002060">
    <property type="entry name" value="PRK00892.1"/>
    <property type="match status" value="1"/>
</dbReference>
<dbReference type="PANTHER" id="PTHR43378">
    <property type="entry name" value="UDP-3-O-ACYLGLUCOSAMINE N-ACYLTRANSFERASE"/>
    <property type="match status" value="1"/>
</dbReference>
<dbReference type="PANTHER" id="PTHR43378:SF2">
    <property type="entry name" value="UDP-3-O-ACYLGLUCOSAMINE N-ACYLTRANSFERASE 1, MITOCHONDRIAL-RELATED"/>
    <property type="match status" value="1"/>
</dbReference>
<dbReference type="Pfam" id="PF00132">
    <property type="entry name" value="Hexapep"/>
    <property type="match status" value="1"/>
</dbReference>
<dbReference type="Pfam" id="PF04613">
    <property type="entry name" value="LpxD"/>
    <property type="match status" value="1"/>
</dbReference>
<dbReference type="SUPFAM" id="SSF51161">
    <property type="entry name" value="Trimeric LpxA-like enzymes"/>
    <property type="match status" value="1"/>
</dbReference>
<organism>
    <name type="scientific">Sulfurimonas denitrificans (strain ATCC 33889 / DSM 1251)</name>
    <name type="common">Thiomicrospira denitrificans (strain ATCC 33889 / DSM 1251)</name>
    <dbReference type="NCBI Taxonomy" id="326298"/>
    <lineage>
        <taxon>Bacteria</taxon>
        <taxon>Pseudomonadati</taxon>
        <taxon>Campylobacterota</taxon>
        <taxon>Epsilonproteobacteria</taxon>
        <taxon>Campylobacterales</taxon>
        <taxon>Sulfurimonadaceae</taxon>
        <taxon>Sulfurimonas</taxon>
    </lineage>
</organism>